<protein>
    <recommendedName>
        <fullName>UDP-glucose 4-epimerase</fullName>
        <ecNumber>5.1.3.2</ecNumber>
    </recommendedName>
    <alternativeName>
        <fullName>Galactowaldenase</fullName>
    </alternativeName>
    <alternativeName>
        <fullName>UDP-galactose 4-epimerase</fullName>
    </alternativeName>
</protein>
<sequence length="139" mass="15156">MKVLVTGGSGYIGSHTCVQLLQRGHEVVILDNLCNSKRRILPVIERLGGKEATFIEGDIRNEARMTEILHDHAIEAVIHFAGLKAVGESVAKPLEYYDNNVTGTLKLVSAMRAAGVKNFIFSSSATVYGDQPKIPYVES</sequence>
<accession>P45602</accession>
<evidence type="ECO:0000250" key="1"/>
<evidence type="ECO:0000305" key="2"/>
<organism>
    <name type="scientific">Klebsiella pneumoniae</name>
    <dbReference type="NCBI Taxonomy" id="573"/>
    <lineage>
        <taxon>Bacteria</taxon>
        <taxon>Pseudomonadati</taxon>
        <taxon>Pseudomonadota</taxon>
        <taxon>Gammaproteobacteria</taxon>
        <taxon>Enterobacterales</taxon>
        <taxon>Enterobacteriaceae</taxon>
        <taxon>Klebsiella/Raoultella group</taxon>
        <taxon>Klebsiella</taxon>
        <taxon>Klebsiella pneumoniae complex</taxon>
    </lineage>
</organism>
<keyword id="KW-0119">Carbohydrate metabolism</keyword>
<keyword id="KW-0299">Galactose metabolism</keyword>
<keyword id="KW-0413">Isomerase</keyword>
<keyword id="KW-0520">NAD</keyword>
<name>GALE_KLEPN</name>
<proteinExistence type="inferred from homology"/>
<gene>
    <name type="primary">galE</name>
</gene>
<reference key="1">
    <citation type="journal article" date="1992" name="J. Biochem.">
        <title>Cloning and expression of the Klebsiella pneumoniae galactose operon.</title>
        <authorList>
            <person name="Peng H.L."/>
            <person name="Fu T.F."/>
            <person name="Liu S.F."/>
            <person name="Chang H.Y."/>
        </authorList>
    </citation>
    <scope>NUCLEOTIDE SEQUENCE [GENOMIC DNA]</scope>
</reference>
<feature type="chain" id="PRO_0000183206" description="UDP-glucose 4-epimerase">
    <location>
        <begin position="1"/>
        <end position="139" status="greater than"/>
    </location>
</feature>
<feature type="active site" description="Proton acceptor" evidence="1">
    <location>
        <position position="136"/>
    </location>
</feature>
<feature type="binding site" evidence="1">
    <location>
        <begin position="11"/>
        <end position="12"/>
    </location>
    <ligand>
        <name>NAD(+)</name>
        <dbReference type="ChEBI" id="CHEBI:57540"/>
    </ligand>
</feature>
<feature type="binding site" evidence="1">
    <location>
        <begin position="31"/>
        <end position="36"/>
    </location>
    <ligand>
        <name>NAD(+)</name>
        <dbReference type="ChEBI" id="CHEBI:57540"/>
    </ligand>
</feature>
<feature type="binding site" evidence="1">
    <location>
        <begin position="58"/>
        <end position="59"/>
    </location>
    <ligand>
        <name>NAD(+)</name>
        <dbReference type="ChEBI" id="CHEBI:57540"/>
    </ligand>
</feature>
<feature type="binding site" evidence="1">
    <location>
        <begin position="80"/>
        <end position="84"/>
    </location>
    <ligand>
        <name>NAD(+)</name>
        <dbReference type="ChEBI" id="CHEBI:57540"/>
    </ligand>
</feature>
<feature type="binding site" evidence="1">
    <location>
        <position position="99"/>
    </location>
    <ligand>
        <name>NAD(+)</name>
        <dbReference type="ChEBI" id="CHEBI:57540"/>
    </ligand>
</feature>
<feature type="binding site" evidence="1">
    <location>
        <position position="124"/>
    </location>
    <ligand>
        <name>NAD(+)</name>
        <dbReference type="ChEBI" id="CHEBI:57540"/>
    </ligand>
</feature>
<feature type="binding site" evidence="1">
    <location>
        <position position="124"/>
    </location>
    <ligand>
        <name>substrate</name>
    </ligand>
</feature>
<feature type="non-terminal residue">
    <location>
        <position position="139"/>
    </location>
</feature>
<comment type="function">
    <text evidence="1">Involved in the metabolism of galactose. Catalyzes the conversion of UDP-galactose (UDP-Gal) to UDP-glucose (UDP-Glc) through a mechanism involving the transient reduction of NAD (By similarity).</text>
</comment>
<comment type="catalytic activity">
    <reaction>
        <text>UDP-alpha-D-glucose = UDP-alpha-D-galactose</text>
        <dbReference type="Rhea" id="RHEA:22168"/>
        <dbReference type="ChEBI" id="CHEBI:58885"/>
        <dbReference type="ChEBI" id="CHEBI:66914"/>
        <dbReference type="EC" id="5.1.3.2"/>
    </reaction>
</comment>
<comment type="cofactor">
    <cofactor evidence="1">
        <name>NAD(+)</name>
        <dbReference type="ChEBI" id="CHEBI:57540"/>
    </cofactor>
</comment>
<comment type="pathway">
    <text>Carbohydrate metabolism; galactose metabolism.</text>
</comment>
<comment type="subunit">
    <text evidence="1">Homodimer.</text>
</comment>
<comment type="similarity">
    <text evidence="2">Belongs to the NAD(P)-dependent epimerase/dehydratase family.</text>
</comment>
<dbReference type="EC" id="5.1.3.2"/>
<dbReference type="EMBL" id="M94964">
    <property type="protein sequence ID" value="AAA20941.1"/>
    <property type="molecule type" value="Genomic_DNA"/>
</dbReference>
<dbReference type="PIR" id="JX0238">
    <property type="entry name" value="JX0238"/>
</dbReference>
<dbReference type="SMR" id="P45602"/>
<dbReference type="UniPathway" id="UPA00214"/>
<dbReference type="GO" id="GO:0005829">
    <property type="term" value="C:cytosol"/>
    <property type="evidence" value="ECO:0007669"/>
    <property type="project" value="TreeGrafter"/>
</dbReference>
<dbReference type="GO" id="GO:0003978">
    <property type="term" value="F:UDP-glucose 4-epimerase activity"/>
    <property type="evidence" value="ECO:0007669"/>
    <property type="project" value="UniProtKB-EC"/>
</dbReference>
<dbReference type="GO" id="GO:0006012">
    <property type="term" value="P:galactose metabolic process"/>
    <property type="evidence" value="ECO:0007669"/>
    <property type="project" value="UniProtKB-UniPathway"/>
</dbReference>
<dbReference type="Gene3D" id="3.40.50.720">
    <property type="entry name" value="NAD(P)-binding Rossmann-like Domain"/>
    <property type="match status" value="1"/>
</dbReference>
<dbReference type="InterPro" id="IPR001509">
    <property type="entry name" value="Epimerase_deHydtase"/>
</dbReference>
<dbReference type="InterPro" id="IPR036291">
    <property type="entry name" value="NAD(P)-bd_dom_sf"/>
</dbReference>
<dbReference type="PANTHER" id="PTHR43725">
    <property type="entry name" value="UDP-GLUCOSE 4-EPIMERASE"/>
    <property type="match status" value="1"/>
</dbReference>
<dbReference type="PANTHER" id="PTHR43725:SF47">
    <property type="entry name" value="UDP-GLUCOSE 4-EPIMERASE"/>
    <property type="match status" value="1"/>
</dbReference>
<dbReference type="Pfam" id="PF01370">
    <property type="entry name" value="Epimerase"/>
    <property type="match status" value="1"/>
</dbReference>
<dbReference type="SUPFAM" id="SSF51735">
    <property type="entry name" value="NAD(P)-binding Rossmann-fold domains"/>
    <property type="match status" value="1"/>
</dbReference>